<proteinExistence type="inferred from homology"/>
<organism>
    <name type="scientific">Listeria monocytogenes serotype 4a (strain HCC23)</name>
    <dbReference type="NCBI Taxonomy" id="552536"/>
    <lineage>
        <taxon>Bacteria</taxon>
        <taxon>Bacillati</taxon>
        <taxon>Bacillota</taxon>
        <taxon>Bacilli</taxon>
        <taxon>Bacillales</taxon>
        <taxon>Listeriaceae</taxon>
        <taxon>Listeria</taxon>
    </lineage>
</organism>
<reference key="1">
    <citation type="journal article" date="2011" name="J. Bacteriol.">
        <title>Genome sequence of lineage III Listeria monocytogenes strain HCC23.</title>
        <authorList>
            <person name="Steele C.L."/>
            <person name="Donaldson J.R."/>
            <person name="Paul D."/>
            <person name="Banes M.M."/>
            <person name="Arick T."/>
            <person name="Bridges S.M."/>
            <person name="Lawrence M.L."/>
        </authorList>
    </citation>
    <scope>NUCLEOTIDE SEQUENCE [LARGE SCALE GENOMIC DNA]</scope>
    <source>
        <strain>HCC23</strain>
    </source>
</reference>
<accession>B8DHK8</accession>
<evidence type="ECO:0000250" key="1">
    <source>
        <dbReference type="UniProtKB" id="Q2FXT0"/>
    </source>
</evidence>
<evidence type="ECO:0000255" key="2">
    <source>
        <dbReference type="HAMAP-Rule" id="MF_00539"/>
    </source>
</evidence>
<evidence type="ECO:0000256" key="3">
    <source>
        <dbReference type="SAM" id="MobiDB-lite"/>
    </source>
</evidence>
<evidence type="ECO:0000305" key="4"/>
<dbReference type="EMBL" id="CP001175">
    <property type="protein sequence ID" value="ACK39377.1"/>
    <property type="molecule type" value="Genomic_DNA"/>
</dbReference>
<dbReference type="RefSeq" id="WP_003726866.1">
    <property type="nucleotide sequence ID" value="NC_011660.1"/>
</dbReference>
<dbReference type="SMR" id="B8DHK8"/>
<dbReference type="GeneID" id="93239419"/>
<dbReference type="KEGG" id="lmh:LMHCC_1029"/>
<dbReference type="HOGENOM" id="CLU_095424_4_0_9"/>
<dbReference type="GO" id="GO:0022625">
    <property type="term" value="C:cytosolic large ribosomal subunit"/>
    <property type="evidence" value="ECO:0007669"/>
    <property type="project" value="TreeGrafter"/>
</dbReference>
<dbReference type="GO" id="GO:0003735">
    <property type="term" value="F:structural constituent of ribosome"/>
    <property type="evidence" value="ECO:0007669"/>
    <property type="project" value="InterPro"/>
</dbReference>
<dbReference type="GO" id="GO:0006412">
    <property type="term" value="P:translation"/>
    <property type="evidence" value="ECO:0007669"/>
    <property type="project" value="UniProtKB-UniRule"/>
</dbReference>
<dbReference type="FunFam" id="2.40.50.100:FF:000004">
    <property type="entry name" value="50S ribosomal protein L27"/>
    <property type="match status" value="1"/>
</dbReference>
<dbReference type="Gene3D" id="2.40.50.100">
    <property type="match status" value="1"/>
</dbReference>
<dbReference type="HAMAP" id="MF_00539">
    <property type="entry name" value="Ribosomal_bL27"/>
    <property type="match status" value="1"/>
</dbReference>
<dbReference type="InterPro" id="IPR001684">
    <property type="entry name" value="Ribosomal_bL27"/>
</dbReference>
<dbReference type="InterPro" id="IPR018261">
    <property type="entry name" value="Ribosomal_bL27_CS"/>
</dbReference>
<dbReference type="NCBIfam" id="TIGR00062">
    <property type="entry name" value="L27"/>
    <property type="match status" value="1"/>
</dbReference>
<dbReference type="PANTHER" id="PTHR15893:SF0">
    <property type="entry name" value="LARGE RIBOSOMAL SUBUNIT PROTEIN BL27M"/>
    <property type="match status" value="1"/>
</dbReference>
<dbReference type="PANTHER" id="PTHR15893">
    <property type="entry name" value="RIBOSOMAL PROTEIN L27"/>
    <property type="match status" value="1"/>
</dbReference>
<dbReference type="Pfam" id="PF01016">
    <property type="entry name" value="Ribosomal_L27"/>
    <property type="match status" value="1"/>
</dbReference>
<dbReference type="PRINTS" id="PR00063">
    <property type="entry name" value="RIBOSOMALL27"/>
</dbReference>
<dbReference type="SUPFAM" id="SSF110324">
    <property type="entry name" value="Ribosomal L27 protein-like"/>
    <property type="match status" value="1"/>
</dbReference>
<dbReference type="PROSITE" id="PS00831">
    <property type="entry name" value="RIBOSOMAL_L27"/>
    <property type="match status" value="1"/>
</dbReference>
<protein>
    <recommendedName>
        <fullName evidence="2">Large ribosomal subunit protein bL27</fullName>
    </recommendedName>
    <alternativeName>
        <fullName evidence="4">50S ribosomal protein L27</fullName>
    </alternativeName>
</protein>
<keyword id="KW-0687">Ribonucleoprotein</keyword>
<keyword id="KW-0689">Ribosomal protein</keyword>
<name>RL27_LISMH</name>
<feature type="propeptide" id="PRO_0000459910" evidence="1">
    <location>
        <begin position="1"/>
        <end position="9"/>
    </location>
</feature>
<feature type="chain" id="PRO_1000146536" description="Large ribosomal subunit protein bL27">
    <location>
        <begin position="10"/>
        <end position="96"/>
    </location>
</feature>
<feature type="region of interest" description="Disordered" evidence="3">
    <location>
        <begin position="1"/>
        <end position="33"/>
    </location>
</feature>
<feature type="compositionally biased region" description="Basic and acidic residues" evidence="3">
    <location>
        <begin position="22"/>
        <end position="33"/>
    </location>
</feature>
<gene>
    <name evidence="2" type="primary">rpmA</name>
    <name type="ordered locus">LMHCC_1029</name>
</gene>
<sequence length="96" mass="10551">MLKFDIQHFAHKKGGGSTSNGRDSESKRLGAKRADGQFVTGGSILYRQRGTKIYPGTNVGRGGDDTLFAKTDGVVRFERMGRDKKKVSVYPEVQEA</sequence>
<comment type="PTM">
    <text evidence="1">The N-terminus is cleaved by ribosomal processing cysteine protease Prp.</text>
</comment>
<comment type="similarity">
    <text evidence="2">Belongs to the bacterial ribosomal protein bL27 family.</text>
</comment>